<organismHost>
    <name type="scientific">Homo sapiens</name>
    <name type="common">Human</name>
    <dbReference type="NCBI Taxonomy" id="9606"/>
</organismHost>
<organismHost>
    <name type="scientific">Phlebotomus papatasi</name>
    <name type="common">Sandfly</name>
    <dbReference type="NCBI Taxonomy" id="29031"/>
</organismHost>
<sequence>MINNNMMNSQYMFDYPAINIDVRCHRLLSSVSYVAYNKFHTHDVSTYEHCEIPLEKLRLGFGRRNSLADFYSLGELPASWGPACYFSSVKPMMYTFQGMASDLSRFDLTSFSRKGLPNVLKALSWPLGIPDCEIFSICSDRFVRGLQTRDQLMSYILRMGDSHSLDECIVQAHKKILQEARRLGLSDEHYNGYDLFREIGSLVCLRLINAEPFDTASSGEALDVRTVIRSYRASDPSTGLTEYGNSLWTPIHSHVDENDESSSDSDF</sequence>
<protein>
    <recommendedName>
        <fullName>Non-structural protein NS-S</fullName>
    </recommendedName>
</protein>
<gene>
    <name type="primary">NSS</name>
</gene>
<reference key="1">
    <citation type="journal article" date="1989" name="Virology">
        <title>The S RNA segment of Sandfly Fever Sicilian virus: evidence for an ambisense genome.</title>
        <authorList>
            <person name="Marriott A.C."/>
            <person name="Ward V.K."/>
            <person name="Nuttall P.A."/>
        </authorList>
    </citation>
    <scope>NUCLEOTIDE SEQUENCE [GENOMIC RNA]</scope>
</reference>
<comment type="similarity">
    <text evidence="1">Belongs to the phlebovirus NS-S protein family.</text>
</comment>
<name>NSS_SFSV</name>
<feature type="chain" id="PRO_0000221980" description="Non-structural protein NS-S">
    <location>
        <begin position="1"/>
        <end position="267"/>
    </location>
</feature>
<feature type="helix" evidence="3">
    <location>
        <begin position="8"/>
        <end position="10"/>
    </location>
</feature>
<feature type="strand" evidence="3">
    <location>
        <begin position="11"/>
        <end position="19"/>
    </location>
</feature>
<feature type="strand" evidence="2">
    <location>
        <begin position="22"/>
        <end position="24"/>
    </location>
</feature>
<feature type="strand" evidence="3">
    <location>
        <begin position="25"/>
        <end position="28"/>
    </location>
</feature>
<feature type="strand" evidence="3">
    <location>
        <begin position="30"/>
        <end position="39"/>
    </location>
</feature>
<feature type="strand" evidence="3">
    <location>
        <begin position="44"/>
        <end position="47"/>
    </location>
</feature>
<feature type="strand" evidence="3">
    <location>
        <begin position="50"/>
        <end position="53"/>
    </location>
</feature>
<feature type="strand" evidence="3">
    <location>
        <begin position="55"/>
        <end position="60"/>
    </location>
</feature>
<feature type="strand" evidence="3">
    <location>
        <begin position="65"/>
        <end position="67"/>
    </location>
</feature>
<feature type="helix" evidence="3">
    <location>
        <begin position="68"/>
        <end position="71"/>
    </location>
</feature>
<feature type="turn" evidence="3">
    <location>
        <begin position="72"/>
        <end position="74"/>
    </location>
</feature>
<feature type="strand" evidence="3">
    <location>
        <begin position="75"/>
        <end position="79"/>
    </location>
</feature>
<feature type="strand" evidence="3">
    <location>
        <begin position="84"/>
        <end position="86"/>
    </location>
</feature>
<feature type="helix" evidence="3">
    <location>
        <begin position="97"/>
        <end position="102"/>
    </location>
</feature>
<feature type="turn" evidence="2">
    <location>
        <begin position="103"/>
        <end position="105"/>
    </location>
</feature>
<feature type="helix" evidence="2">
    <location>
        <begin position="108"/>
        <end position="112"/>
    </location>
</feature>
<feature type="turn" evidence="2">
    <location>
        <begin position="113"/>
        <end position="115"/>
    </location>
</feature>
<feature type="helix" evidence="3">
    <location>
        <begin position="118"/>
        <end position="124"/>
    </location>
</feature>
<feature type="turn" evidence="3">
    <location>
        <begin position="125"/>
        <end position="127"/>
    </location>
</feature>
<feature type="helix" evidence="3">
    <location>
        <begin position="133"/>
        <end position="138"/>
    </location>
</feature>
<feature type="strand" evidence="3">
    <location>
        <begin position="145"/>
        <end position="148"/>
    </location>
</feature>
<feature type="helix" evidence="3">
    <location>
        <begin position="149"/>
        <end position="159"/>
    </location>
</feature>
<feature type="strand" evidence="2">
    <location>
        <begin position="162"/>
        <end position="164"/>
    </location>
</feature>
<feature type="helix" evidence="3">
    <location>
        <begin position="165"/>
        <end position="182"/>
    </location>
</feature>
<feature type="helix" evidence="3">
    <location>
        <begin position="187"/>
        <end position="189"/>
    </location>
</feature>
<feature type="strand" evidence="3">
    <location>
        <begin position="192"/>
        <end position="194"/>
    </location>
</feature>
<feature type="helix" evidence="3">
    <location>
        <begin position="195"/>
        <end position="209"/>
    </location>
</feature>
<feature type="helix" evidence="2">
    <location>
        <begin position="211"/>
        <end position="213"/>
    </location>
</feature>
<feature type="helix" evidence="2">
    <location>
        <begin position="224"/>
        <end position="229"/>
    </location>
</feature>
<evidence type="ECO:0000305" key="1"/>
<evidence type="ECO:0007829" key="2">
    <source>
        <dbReference type="PDB" id="7RLO"/>
    </source>
</evidence>
<evidence type="ECO:0007829" key="3">
    <source>
        <dbReference type="PDB" id="7VLK"/>
    </source>
</evidence>
<keyword id="KW-0002">3D-structure</keyword>
<proteinExistence type="evidence at protein level"/>
<dbReference type="EMBL" id="J04418">
    <property type="protein sequence ID" value="AAA47459.1"/>
    <property type="molecule type" value="Genomic_RNA"/>
</dbReference>
<dbReference type="PIR" id="B30180">
    <property type="entry name" value="MNVUSS"/>
</dbReference>
<dbReference type="PDB" id="7F64">
    <property type="method" value="EM"/>
    <property type="resolution" value="2.42 A"/>
    <property type="chains" value="K/L=7-267"/>
</dbReference>
<dbReference type="PDB" id="7F66">
    <property type="method" value="EM"/>
    <property type="resolution" value="2.76 A"/>
    <property type="chains" value="K/L=7-267"/>
</dbReference>
<dbReference type="PDB" id="7F67">
    <property type="method" value="EM"/>
    <property type="resolution" value="3.59 A"/>
    <property type="chains" value="K/L=7-267"/>
</dbReference>
<dbReference type="PDB" id="7RLO">
    <property type="method" value="EM"/>
    <property type="resolution" value="2.60 A"/>
    <property type="chains" value="K/L=7-267"/>
</dbReference>
<dbReference type="PDB" id="7VLK">
    <property type="method" value="EM"/>
    <property type="resolution" value="2.27 A"/>
    <property type="chains" value="K/L=7-267"/>
</dbReference>
<dbReference type="PDBsum" id="7F64"/>
<dbReference type="PDBsum" id="7F66"/>
<dbReference type="PDBsum" id="7F67"/>
<dbReference type="PDBsum" id="7RLO"/>
<dbReference type="PDBsum" id="7VLK"/>
<dbReference type="EMDB" id="EMD-24535"/>
<dbReference type="EMDB" id="EMD-31472"/>
<dbReference type="EMDB" id="EMD-31474"/>
<dbReference type="EMDB" id="EMD-31475"/>
<dbReference type="EMDB" id="EMD-32023"/>
<dbReference type="SMR" id="P12792"/>
<dbReference type="IntAct" id="P12792">
    <property type="interactions" value="50"/>
</dbReference>
<dbReference type="InterPro" id="IPR039434">
    <property type="entry name" value="NSs-like"/>
</dbReference>
<dbReference type="InterPro" id="IPR024376">
    <property type="entry name" value="RVFV_non-structural"/>
</dbReference>
<dbReference type="Pfam" id="PF11073">
    <property type="entry name" value="NSs"/>
    <property type="match status" value="1"/>
</dbReference>
<dbReference type="PIRSF" id="PIRSF003956">
    <property type="entry name" value="NS-S_PhleboV"/>
    <property type="match status" value="1"/>
</dbReference>
<accession>P12792</accession>
<organism>
    <name type="scientific">Sandfly fever sicilian virus</name>
    <name type="common">SFS</name>
    <dbReference type="NCBI Taxonomy" id="28292"/>
    <lineage>
        <taxon>Viruses</taxon>
        <taxon>Riboviria</taxon>
        <taxon>Orthornavirae</taxon>
        <taxon>Negarnaviricota</taxon>
        <taxon>Polyploviricotina</taxon>
        <taxon>Ellioviricetes</taxon>
        <taxon>Bunyavirales</taxon>
        <taxon>Phenuiviridae</taxon>
        <taxon>Phlebovirus</taxon>
        <taxon>Phlebovirus siciliaense</taxon>
    </lineage>
</organism>